<reference key="1">
    <citation type="journal article" date="2008" name="J. Bacteriol.">
        <title>Genome sequence of Staphylococcus aureus strain Newman and comparative analysis of staphylococcal genomes: polymorphism and evolution of two major pathogenicity islands.</title>
        <authorList>
            <person name="Baba T."/>
            <person name="Bae T."/>
            <person name="Schneewind O."/>
            <person name="Takeuchi F."/>
            <person name="Hiramatsu K."/>
        </authorList>
    </citation>
    <scope>NUCLEOTIDE SEQUENCE [LARGE SCALE GENOMIC DNA]</scope>
    <source>
        <strain>Newman</strain>
    </source>
</reference>
<organism>
    <name type="scientific">Staphylococcus aureus (strain Newman)</name>
    <dbReference type="NCBI Taxonomy" id="426430"/>
    <lineage>
        <taxon>Bacteria</taxon>
        <taxon>Bacillati</taxon>
        <taxon>Bacillota</taxon>
        <taxon>Bacilli</taxon>
        <taxon>Bacillales</taxon>
        <taxon>Staphylococcaceae</taxon>
        <taxon>Staphylococcus</taxon>
    </lineage>
</organism>
<protein>
    <recommendedName>
        <fullName evidence="1">Monofunctional glycosyltransferase</fullName>
        <shortName evidence="1">MGT</shortName>
        <ecNumber evidence="1">2.4.99.28</ecNumber>
    </recommendedName>
    <alternativeName>
        <fullName evidence="1">Peptidoglycan TGase</fullName>
    </alternativeName>
</protein>
<dbReference type="EC" id="2.4.99.28" evidence="1"/>
<dbReference type="EMBL" id="AP009351">
    <property type="protein sequence ID" value="BAF68038.1"/>
    <property type="molecule type" value="Genomic_DNA"/>
</dbReference>
<dbReference type="SMR" id="A6QI56"/>
<dbReference type="CAZy" id="GT51">
    <property type="family name" value="Glycosyltransferase Family 51"/>
</dbReference>
<dbReference type="KEGG" id="sae:NWMN_1766"/>
<dbReference type="HOGENOM" id="CLU_006354_1_2_9"/>
<dbReference type="UniPathway" id="UPA00219"/>
<dbReference type="Proteomes" id="UP000006386">
    <property type="component" value="Chromosome"/>
</dbReference>
<dbReference type="GO" id="GO:0030288">
    <property type="term" value="C:outer membrane-bounded periplasmic space"/>
    <property type="evidence" value="ECO:0007669"/>
    <property type="project" value="TreeGrafter"/>
</dbReference>
<dbReference type="GO" id="GO:0005886">
    <property type="term" value="C:plasma membrane"/>
    <property type="evidence" value="ECO:0007669"/>
    <property type="project" value="UniProtKB-SubCell"/>
</dbReference>
<dbReference type="GO" id="GO:0008955">
    <property type="term" value="F:peptidoglycan glycosyltransferase activity"/>
    <property type="evidence" value="ECO:0007669"/>
    <property type="project" value="UniProtKB-UniRule"/>
</dbReference>
<dbReference type="GO" id="GO:0071555">
    <property type="term" value="P:cell wall organization"/>
    <property type="evidence" value="ECO:0007669"/>
    <property type="project" value="UniProtKB-KW"/>
</dbReference>
<dbReference type="GO" id="GO:0009252">
    <property type="term" value="P:peptidoglycan biosynthetic process"/>
    <property type="evidence" value="ECO:0007669"/>
    <property type="project" value="UniProtKB-UniRule"/>
</dbReference>
<dbReference type="GO" id="GO:0008360">
    <property type="term" value="P:regulation of cell shape"/>
    <property type="evidence" value="ECO:0007669"/>
    <property type="project" value="UniProtKB-KW"/>
</dbReference>
<dbReference type="Gene3D" id="1.10.3810.10">
    <property type="entry name" value="Biosynthetic peptidoglycan transglycosylase-like"/>
    <property type="match status" value="1"/>
</dbReference>
<dbReference type="HAMAP" id="MF_01434">
    <property type="entry name" value="MGT"/>
    <property type="match status" value="1"/>
</dbReference>
<dbReference type="InterPro" id="IPR001264">
    <property type="entry name" value="Glyco_trans_51"/>
</dbReference>
<dbReference type="InterPro" id="IPR050396">
    <property type="entry name" value="Glycosyltr_51/Transpeptidase"/>
</dbReference>
<dbReference type="InterPro" id="IPR023346">
    <property type="entry name" value="Lysozyme-like_dom_sf"/>
</dbReference>
<dbReference type="InterPro" id="IPR022978">
    <property type="entry name" value="Monofunct_glyco_trans"/>
</dbReference>
<dbReference type="InterPro" id="IPR036950">
    <property type="entry name" value="PBP_transglycosylase"/>
</dbReference>
<dbReference type="NCBIfam" id="NF010008">
    <property type="entry name" value="PRK13481.1"/>
    <property type="match status" value="1"/>
</dbReference>
<dbReference type="PANTHER" id="PTHR32282">
    <property type="entry name" value="BINDING PROTEIN TRANSPEPTIDASE, PUTATIVE-RELATED"/>
    <property type="match status" value="1"/>
</dbReference>
<dbReference type="PANTHER" id="PTHR32282:SF11">
    <property type="entry name" value="PENICILLIN-BINDING PROTEIN 1B"/>
    <property type="match status" value="1"/>
</dbReference>
<dbReference type="Pfam" id="PF00912">
    <property type="entry name" value="Transgly"/>
    <property type="match status" value="1"/>
</dbReference>
<dbReference type="SUPFAM" id="SSF53955">
    <property type="entry name" value="Lysozyme-like"/>
    <property type="match status" value="1"/>
</dbReference>
<keyword id="KW-1003">Cell membrane</keyword>
<keyword id="KW-0133">Cell shape</keyword>
<keyword id="KW-0961">Cell wall biogenesis/degradation</keyword>
<keyword id="KW-0328">Glycosyltransferase</keyword>
<keyword id="KW-0472">Membrane</keyword>
<keyword id="KW-0573">Peptidoglycan synthesis</keyword>
<keyword id="KW-0808">Transferase</keyword>
<keyword id="KW-0812">Transmembrane</keyword>
<keyword id="KW-1133">Transmembrane helix</keyword>
<feature type="chain" id="PRO_1000073512" description="Monofunctional glycosyltransferase">
    <location>
        <begin position="1"/>
        <end position="269"/>
    </location>
</feature>
<feature type="transmembrane region" description="Helical" evidence="1">
    <location>
        <begin position="46"/>
        <end position="66"/>
    </location>
</feature>
<proteinExistence type="inferred from homology"/>
<accession>A6QI56</accession>
<name>MGT_STAAE</name>
<comment type="function">
    <text evidence="1">Peptidoglycan polymerase that catalyzes glycan chain elongation using lipid-linked disaccharide-pentapeptide as the substrate.</text>
</comment>
<comment type="catalytic activity">
    <reaction evidence="1">
        <text>[GlcNAc-(1-&gt;4)-Mur2Ac(oyl-L-Ala-gamma-D-Glu-L-Lys-D-Ala-D-Ala)](n)-di-trans,octa-cis-undecaprenyl diphosphate + beta-D-GlcNAc-(1-&gt;4)-Mur2Ac(oyl-L-Ala-gamma-D-Glu-L-Lys-D-Ala-D-Ala)-di-trans,octa-cis-undecaprenyl diphosphate = [GlcNAc-(1-&gt;4)-Mur2Ac(oyl-L-Ala-gamma-D-Glu-L-Lys-D-Ala-D-Ala)](n+1)-di-trans,octa-cis-undecaprenyl diphosphate + di-trans,octa-cis-undecaprenyl diphosphate + H(+)</text>
        <dbReference type="Rhea" id="RHEA:23708"/>
        <dbReference type="Rhea" id="RHEA-COMP:9602"/>
        <dbReference type="Rhea" id="RHEA-COMP:9603"/>
        <dbReference type="ChEBI" id="CHEBI:15378"/>
        <dbReference type="ChEBI" id="CHEBI:58405"/>
        <dbReference type="ChEBI" id="CHEBI:60033"/>
        <dbReference type="ChEBI" id="CHEBI:78435"/>
        <dbReference type="EC" id="2.4.99.28"/>
    </reaction>
</comment>
<comment type="pathway">
    <text evidence="1">Cell wall biogenesis; peptidoglycan biosynthesis.</text>
</comment>
<comment type="subcellular location">
    <subcellularLocation>
        <location evidence="1">Cell membrane</location>
        <topology evidence="1">Single-pass membrane protein</topology>
    </subcellularLocation>
</comment>
<comment type="similarity">
    <text evidence="1">Belongs to the glycosyltransferase 51 family.</text>
</comment>
<sequence>MKRSDRYSNSNEHFEHMKHEPHYNTYYQPVGKPPKKKKSKRILLKILLTILIIIALFIGIMYFLSTRDNVDELRKIENKSSFVSADNMPEYVKGAFISMEDERFYNHHGFDLKGTTRALFSTISDRDVQGGSTITQQVVKNYFYDNDRSFTRKVKELFVAHRVEKQYNKNEILSFYLNNIYFGDNQYTLEGAANHYFGTTVNKNSTTMSHITVLQSAILASKVNAPSVYNINNMSENFTQRVSTNLEKMKQQNYINETQYQQAMSQLNR</sequence>
<gene>
    <name evidence="1" type="primary">mgt</name>
    <name type="ordered locus">NWMN_1766</name>
</gene>
<evidence type="ECO:0000255" key="1">
    <source>
        <dbReference type="HAMAP-Rule" id="MF_01434"/>
    </source>
</evidence>